<dbReference type="EMBL" id="AL021711">
    <property type="protein sequence ID" value="CAA16749.1"/>
    <property type="status" value="ALT_SEQ"/>
    <property type="molecule type" value="Genomic_DNA"/>
</dbReference>
<dbReference type="EMBL" id="AL161549">
    <property type="protein sequence ID" value="CAB78894.1"/>
    <property type="status" value="ALT_SEQ"/>
    <property type="molecule type" value="Genomic_DNA"/>
</dbReference>
<dbReference type="EMBL" id="CP002687">
    <property type="protein sequence ID" value="AEE84107.1"/>
    <property type="molecule type" value="Genomic_DNA"/>
</dbReference>
<dbReference type="EMBL" id="DQ446850">
    <property type="protein sequence ID" value="ABE66077.1"/>
    <property type="molecule type" value="mRNA"/>
</dbReference>
<dbReference type="EMBL" id="DQ653208">
    <property type="protein sequence ID" value="ABK28640.1"/>
    <property type="status" value="ALT_SEQ"/>
    <property type="molecule type" value="mRNA"/>
</dbReference>
<dbReference type="EMBL" id="AY088641">
    <property type="protein sequence ID" value="AAM66963.1"/>
    <property type="molecule type" value="mRNA"/>
</dbReference>
<dbReference type="PIR" id="T05029">
    <property type="entry name" value="T05029"/>
</dbReference>
<dbReference type="RefSeq" id="NP_567567.1">
    <property type="nucleotide sequence ID" value="NM_118009.3"/>
</dbReference>
<dbReference type="FunCoup" id="Q1PE68">
    <property type="interactions" value="40"/>
</dbReference>
<dbReference type="PaxDb" id="3702-AT4G18920.1"/>
<dbReference type="ProteomicsDB" id="250858"/>
<dbReference type="EnsemblPlants" id="AT4G18920.1">
    <property type="protein sequence ID" value="AT4G18920.1"/>
    <property type="gene ID" value="AT4G18920"/>
</dbReference>
<dbReference type="GeneID" id="827627"/>
<dbReference type="Gramene" id="AT4G18920.1">
    <property type="protein sequence ID" value="AT4G18920.1"/>
    <property type="gene ID" value="AT4G18920"/>
</dbReference>
<dbReference type="KEGG" id="ath:AT4G18920"/>
<dbReference type="Araport" id="AT4G18920"/>
<dbReference type="TAIR" id="AT4G18920"/>
<dbReference type="eggNOG" id="ENOG502QPUT">
    <property type="taxonomic scope" value="Eukaryota"/>
</dbReference>
<dbReference type="HOGENOM" id="CLU_071931_0_0_1"/>
<dbReference type="InParanoid" id="Q1PE68"/>
<dbReference type="OMA" id="DKGTAMF"/>
<dbReference type="OrthoDB" id="1901244at2759"/>
<dbReference type="PhylomeDB" id="Q1PE68"/>
<dbReference type="PRO" id="PR:Q1PE68"/>
<dbReference type="Proteomes" id="UP000006548">
    <property type="component" value="Chromosome 4"/>
</dbReference>
<dbReference type="ExpressionAtlas" id="Q1PE68">
    <property type="expression patterns" value="baseline and differential"/>
</dbReference>
<dbReference type="InterPro" id="IPR010686">
    <property type="entry name" value="OBAP-like"/>
</dbReference>
<dbReference type="PANTHER" id="PTHR31360">
    <property type="match status" value="1"/>
</dbReference>
<dbReference type="PANTHER" id="PTHR31360:SF14">
    <property type="entry name" value="OIL BODY-ASSOCIATED PROTEIN 2B"/>
    <property type="match status" value="1"/>
</dbReference>
<dbReference type="Pfam" id="PF06884">
    <property type="entry name" value="DUF1264"/>
    <property type="match status" value="1"/>
</dbReference>
<sequence>MASSDKVPVACPASSGDGKEPMGNPTKTTTAMLEKGTAMMQSMKPIRQMSLHVCSFACYSHDPGRQIEVHIYGHRVNQDFLQCAVYDSNSSKAHLIGIEYIVSEKLFESLSPEEQKLWHSHDYEIQMALLVTPRVPELVAKPELKNLAKSYGKFWCTWQIDRGDKLPLGVPSLMVSPQDVNLGRIKPELVKKRDEEHGISTESLKPSRDGICGPEKKNLVADYWVRFRKGFALDVVETDMKRTAPFP</sequence>
<evidence type="ECO:0000256" key="1">
    <source>
        <dbReference type="SAM" id="MobiDB-lite"/>
    </source>
</evidence>
<evidence type="ECO:0000303" key="2">
    <source>
    </source>
</evidence>
<evidence type="ECO:0000305" key="3"/>
<evidence type="ECO:0000312" key="4">
    <source>
        <dbReference type="Araport" id="AT4G18920"/>
    </source>
</evidence>
<evidence type="ECO:0000312" key="5">
    <source>
        <dbReference type="EMBL" id="ABE66077.1"/>
    </source>
</evidence>
<evidence type="ECO:0000312" key="6">
    <source>
        <dbReference type="EMBL" id="CAA16749.1"/>
    </source>
</evidence>
<keyword id="KW-1185">Reference proteome</keyword>
<name>OBP2B_ARATH</name>
<protein>
    <recommendedName>
        <fullName evidence="2">Oil body-associated protein 2B</fullName>
    </recommendedName>
</protein>
<accession>Q1PE68</accession>
<accession>A0MF82</accession>
<accession>O49407</accession>
<accession>Q8L946</accession>
<reference key="1">
    <citation type="journal article" date="1999" name="Nature">
        <title>Sequence and analysis of chromosome 4 of the plant Arabidopsis thaliana.</title>
        <authorList>
            <person name="Mayer K.F.X."/>
            <person name="Schueller C."/>
            <person name="Wambutt R."/>
            <person name="Murphy G."/>
            <person name="Volckaert G."/>
            <person name="Pohl T."/>
            <person name="Duesterhoeft A."/>
            <person name="Stiekema W."/>
            <person name="Entian K.-D."/>
            <person name="Terryn N."/>
            <person name="Harris B."/>
            <person name="Ansorge W."/>
            <person name="Brandt P."/>
            <person name="Grivell L.A."/>
            <person name="Rieger M."/>
            <person name="Weichselgartner M."/>
            <person name="de Simone V."/>
            <person name="Obermaier B."/>
            <person name="Mache R."/>
            <person name="Mueller M."/>
            <person name="Kreis M."/>
            <person name="Delseny M."/>
            <person name="Puigdomenech P."/>
            <person name="Watson M."/>
            <person name="Schmidtheini T."/>
            <person name="Reichert B."/>
            <person name="Portetelle D."/>
            <person name="Perez-Alonso M."/>
            <person name="Boutry M."/>
            <person name="Bancroft I."/>
            <person name="Vos P."/>
            <person name="Hoheisel J."/>
            <person name="Zimmermann W."/>
            <person name="Wedler H."/>
            <person name="Ridley P."/>
            <person name="Langham S.-A."/>
            <person name="McCullagh B."/>
            <person name="Bilham L."/>
            <person name="Robben J."/>
            <person name="van der Schueren J."/>
            <person name="Grymonprez B."/>
            <person name="Chuang Y.-J."/>
            <person name="Vandenbussche F."/>
            <person name="Braeken M."/>
            <person name="Weltjens I."/>
            <person name="Voet M."/>
            <person name="Bastiaens I."/>
            <person name="Aert R."/>
            <person name="Defoor E."/>
            <person name="Weitzenegger T."/>
            <person name="Bothe G."/>
            <person name="Ramsperger U."/>
            <person name="Hilbert H."/>
            <person name="Braun M."/>
            <person name="Holzer E."/>
            <person name="Brandt A."/>
            <person name="Peters S."/>
            <person name="van Staveren M."/>
            <person name="Dirkse W."/>
            <person name="Mooijman P."/>
            <person name="Klein Lankhorst R."/>
            <person name="Rose M."/>
            <person name="Hauf J."/>
            <person name="Koetter P."/>
            <person name="Berneiser S."/>
            <person name="Hempel S."/>
            <person name="Feldpausch M."/>
            <person name="Lamberth S."/>
            <person name="Van den Daele H."/>
            <person name="De Keyser A."/>
            <person name="Buysshaert C."/>
            <person name="Gielen J."/>
            <person name="Villarroel R."/>
            <person name="De Clercq R."/>
            <person name="van Montagu M."/>
            <person name="Rogers J."/>
            <person name="Cronin A."/>
            <person name="Quail M.A."/>
            <person name="Bray-Allen S."/>
            <person name="Clark L."/>
            <person name="Doggett J."/>
            <person name="Hall S."/>
            <person name="Kay M."/>
            <person name="Lennard N."/>
            <person name="McLay K."/>
            <person name="Mayes R."/>
            <person name="Pettett A."/>
            <person name="Rajandream M.A."/>
            <person name="Lyne M."/>
            <person name="Benes V."/>
            <person name="Rechmann S."/>
            <person name="Borkova D."/>
            <person name="Bloecker H."/>
            <person name="Scharfe M."/>
            <person name="Grimm M."/>
            <person name="Loehnert T.-H."/>
            <person name="Dose S."/>
            <person name="de Haan M."/>
            <person name="Maarse A.C."/>
            <person name="Schaefer M."/>
            <person name="Mueller-Auer S."/>
            <person name="Gabel C."/>
            <person name="Fuchs M."/>
            <person name="Fartmann B."/>
            <person name="Granderath K."/>
            <person name="Dauner D."/>
            <person name="Herzl A."/>
            <person name="Neumann S."/>
            <person name="Argiriou A."/>
            <person name="Vitale D."/>
            <person name="Liguori R."/>
            <person name="Piravandi E."/>
            <person name="Massenet O."/>
            <person name="Quigley F."/>
            <person name="Clabauld G."/>
            <person name="Muendlein A."/>
            <person name="Felber R."/>
            <person name="Schnabl S."/>
            <person name="Hiller R."/>
            <person name="Schmidt W."/>
            <person name="Lecharny A."/>
            <person name="Aubourg S."/>
            <person name="Chefdor F."/>
            <person name="Cooke R."/>
            <person name="Berger C."/>
            <person name="Monfort A."/>
            <person name="Casacuberta E."/>
            <person name="Gibbons T."/>
            <person name="Weber N."/>
            <person name="Vandenbol M."/>
            <person name="Bargues M."/>
            <person name="Terol J."/>
            <person name="Torres A."/>
            <person name="Perez-Perez A."/>
            <person name="Purnelle B."/>
            <person name="Bent E."/>
            <person name="Johnson S."/>
            <person name="Tacon D."/>
            <person name="Jesse T."/>
            <person name="Heijnen L."/>
            <person name="Schwarz S."/>
            <person name="Scholler P."/>
            <person name="Heber S."/>
            <person name="Francs P."/>
            <person name="Bielke C."/>
            <person name="Frishman D."/>
            <person name="Haase D."/>
            <person name="Lemcke K."/>
            <person name="Mewes H.-W."/>
            <person name="Stocker S."/>
            <person name="Zaccaria P."/>
            <person name="Bevan M."/>
            <person name="Wilson R.K."/>
            <person name="de la Bastide M."/>
            <person name="Habermann K."/>
            <person name="Parnell L."/>
            <person name="Dedhia N."/>
            <person name="Gnoj L."/>
            <person name="Schutz K."/>
            <person name="Huang E."/>
            <person name="Spiegel L."/>
            <person name="Sekhon M."/>
            <person name="Murray J."/>
            <person name="Sheet P."/>
            <person name="Cordes M."/>
            <person name="Abu-Threideh J."/>
            <person name="Stoneking T."/>
            <person name="Kalicki J."/>
            <person name="Graves T."/>
            <person name="Harmon G."/>
            <person name="Edwards J."/>
            <person name="Latreille P."/>
            <person name="Courtney L."/>
            <person name="Cloud J."/>
            <person name="Abbott A."/>
            <person name="Scott K."/>
            <person name="Johnson D."/>
            <person name="Minx P."/>
            <person name="Bentley D."/>
            <person name="Fulton B."/>
            <person name="Miller N."/>
            <person name="Greco T."/>
            <person name="Kemp K."/>
            <person name="Kramer J."/>
            <person name="Fulton L."/>
            <person name="Mardis E."/>
            <person name="Dante M."/>
            <person name="Pepin K."/>
            <person name="Hillier L.W."/>
            <person name="Nelson J."/>
            <person name="Spieth J."/>
            <person name="Ryan E."/>
            <person name="Andrews S."/>
            <person name="Geisel C."/>
            <person name="Layman D."/>
            <person name="Du H."/>
            <person name="Ali J."/>
            <person name="Berghoff A."/>
            <person name="Jones K."/>
            <person name="Drone K."/>
            <person name="Cotton M."/>
            <person name="Joshu C."/>
            <person name="Antonoiu B."/>
            <person name="Zidanic M."/>
            <person name="Strong C."/>
            <person name="Sun H."/>
            <person name="Lamar B."/>
            <person name="Yordan C."/>
            <person name="Ma P."/>
            <person name="Zhong J."/>
            <person name="Preston R."/>
            <person name="Vil D."/>
            <person name="Shekher M."/>
            <person name="Matero A."/>
            <person name="Shah R."/>
            <person name="Swaby I.K."/>
            <person name="O'Shaughnessy A."/>
            <person name="Rodriguez M."/>
            <person name="Hoffman J."/>
            <person name="Till S."/>
            <person name="Granat S."/>
            <person name="Shohdy N."/>
            <person name="Hasegawa A."/>
            <person name="Hameed A."/>
            <person name="Lodhi M."/>
            <person name="Johnson A."/>
            <person name="Chen E."/>
            <person name="Marra M.A."/>
            <person name="Martienssen R."/>
            <person name="McCombie W.R."/>
        </authorList>
    </citation>
    <scope>NUCLEOTIDE SEQUENCE [LARGE SCALE GENOMIC DNA]</scope>
    <source>
        <strain>cv. Columbia</strain>
    </source>
</reference>
<reference key="2">
    <citation type="journal article" date="2017" name="Plant J.">
        <title>Araport11: a complete reannotation of the Arabidopsis thaliana reference genome.</title>
        <authorList>
            <person name="Cheng C.Y."/>
            <person name="Krishnakumar V."/>
            <person name="Chan A.P."/>
            <person name="Thibaud-Nissen F."/>
            <person name="Schobel S."/>
            <person name="Town C.D."/>
        </authorList>
    </citation>
    <scope>GENOME REANNOTATION</scope>
    <source>
        <strain>cv. Columbia</strain>
    </source>
</reference>
<reference key="3">
    <citation type="journal article" date="2006" name="Plant Biotechnol. J.">
        <title>Simultaneous high-throughput recombinational cloning of open reading frames in closed and open configurations.</title>
        <authorList>
            <person name="Underwood B.A."/>
            <person name="Vanderhaeghen R."/>
            <person name="Whitford R."/>
            <person name="Town C.D."/>
            <person name="Hilson P."/>
        </authorList>
    </citation>
    <scope>NUCLEOTIDE SEQUENCE [LARGE SCALE MRNA]</scope>
    <source>
        <strain>cv. Columbia</strain>
    </source>
</reference>
<reference key="4">
    <citation type="submission" date="2002-03" db="EMBL/GenBank/DDBJ databases">
        <title>Full-length cDNA from Arabidopsis thaliana.</title>
        <authorList>
            <person name="Brover V.V."/>
            <person name="Troukhan M.E."/>
            <person name="Alexandrov N.A."/>
            <person name="Lu Y.-P."/>
            <person name="Flavell R.B."/>
            <person name="Feldmann K.A."/>
        </authorList>
    </citation>
    <scope>NUCLEOTIDE SEQUENCE [LARGE SCALE MRNA]</scope>
</reference>
<reference key="5">
    <citation type="journal article" date="2014" name="Plant Physiol.">
        <title>The evolutionary conserved oil body associated protein OBAP1 participates in the regulation of oil body size.</title>
        <authorList>
            <person name="Lopez-Ribera I."/>
            <person name="La Paz J.L."/>
            <person name="Repiso C."/>
            <person name="Garcia N."/>
            <person name="Miquel M."/>
            <person name="Hernandez M.L."/>
            <person name="Martinez-Rivas J.M."/>
            <person name="Vicient C.M."/>
        </authorList>
    </citation>
    <scope>GENE FAMILY</scope>
    <scope>NOMENCLATURE</scope>
</reference>
<gene>
    <name evidence="2" type="primary">OBAP2B</name>
    <name evidence="4" type="ordered locus">At4g18920</name>
    <name evidence="6" type="ORF">F13C5.90</name>
</gene>
<comment type="similarity">
    <text evidence="3">Belongs to the OBAP family.</text>
</comment>
<comment type="sequence caution" evidence="3">
    <conflict type="erroneous termination">
        <sequence resource="EMBL-CDS" id="ABK28640"/>
    </conflict>
    <text>Extended C-terminus.</text>
</comment>
<comment type="sequence caution" evidence="3">
    <conflict type="erroneous gene model prediction">
        <sequence resource="EMBL-CDS" id="CAA16749"/>
    </conflict>
</comment>
<comment type="sequence caution" evidence="3">
    <conflict type="erroneous gene model prediction">
        <sequence resource="EMBL-CDS" id="CAB78894"/>
    </conflict>
</comment>
<proteinExistence type="evidence at transcript level"/>
<feature type="chain" id="PRO_0000436089" description="Oil body-associated protein 2B">
    <location>
        <begin position="1"/>
        <end position="247"/>
    </location>
</feature>
<feature type="region of interest" description="Disordered" evidence="1">
    <location>
        <begin position="1"/>
        <end position="28"/>
    </location>
</feature>
<feature type="sequence conflict" description="In Ref. 4; AAM66963." evidence="3" ref="4">
    <original>V</original>
    <variation>I</variation>
    <location>
        <position position="76"/>
    </location>
</feature>
<feature type="sequence conflict" description="In Ref. 4; AAM66963." evidence="3" ref="4">
    <original>I</original>
    <variation>N</variation>
    <location>
        <position position="199"/>
    </location>
</feature>
<organism evidence="5">
    <name type="scientific">Arabidopsis thaliana</name>
    <name type="common">Mouse-ear cress</name>
    <dbReference type="NCBI Taxonomy" id="3702"/>
    <lineage>
        <taxon>Eukaryota</taxon>
        <taxon>Viridiplantae</taxon>
        <taxon>Streptophyta</taxon>
        <taxon>Embryophyta</taxon>
        <taxon>Tracheophyta</taxon>
        <taxon>Spermatophyta</taxon>
        <taxon>Magnoliopsida</taxon>
        <taxon>eudicotyledons</taxon>
        <taxon>Gunneridae</taxon>
        <taxon>Pentapetalae</taxon>
        <taxon>rosids</taxon>
        <taxon>malvids</taxon>
        <taxon>Brassicales</taxon>
        <taxon>Brassicaceae</taxon>
        <taxon>Camelineae</taxon>
        <taxon>Arabidopsis</taxon>
    </lineage>
</organism>